<name>HEMS_YEREN</name>
<feature type="chain" id="PRO_0000083948" description="Hemin transport protein HemS">
    <location>
        <begin position="1"/>
        <end position="345"/>
    </location>
</feature>
<feature type="helix" evidence="2">
    <location>
        <begin position="5"/>
        <end position="15"/>
    </location>
</feature>
<feature type="helix" evidence="2">
    <location>
        <begin position="21"/>
        <end position="28"/>
    </location>
</feature>
<feature type="helix" evidence="2">
    <location>
        <begin position="32"/>
        <end position="38"/>
    </location>
</feature>
<feature type="turn" evidence="2">
    <location>
        <begin position="39"/>
        <end position="42"/>
    </location>
</feature>
<feature type="strand" evidence="2">
    <location>
        <begin position="43"/>
        <end position="47"/>
    </location>
</feature>
<feature type="helix" evidence="2">
    <location>
        <begin position="51"/>
        <end position="57"/>
    </location>
</feature>
<feature type="helix" evidence="2">
    <location>
        <begin position="58"/>
        <end position="61"/>
    </location>
</feature>
<feature type="strand" evidence="2">
    <location>
        <begin position="63"/>
        <end position="69"/>
    </location>
</feature>
<feature type="strand" evidence="2">
    <location>
        <begin position="71"/>
        <end position="79"/>
    </location>
</feature>
<feature type="strand" evidence="2">
    <location>
        <begin position="83"/>
        <end position="85"/>
    </location>
</feature>
<feature type="strand" evidence="2">
    <location>
        <begin position="91"/>
        <end position="93"/>
    </location>
</feature>
<feature type="strand" evidence="2">
    <location>
        <begin position="101"/>
        <end position="103"/>
    </location>
</feature>
<feature type="helix" evidence="2">
    <location>
        <begin position="105"/>
        <end position="107"/>
    </location>
</feature>
<feature type="strand" evidence="2">
    <location>
        <begin position="108"/>
        <end position="116"/>
    </location>
</feature>
<feature type="strand" evidence="2">
    <location>
        <begin position="123"/>
        <end position="130"/>
    </location>
</feature>
<feature type="strand" evidence="2">
    <location>
        <begin position="135"/>
        <end position="140"/>
    </location>
</feature>
<feature type="helix" evidence="2">
    <location>
        <begin position="147"/>
        <end position="157"/>
    </location>
</feature>
<feature type="strand" evidence="2">
    <location>
        <begin position="158"/>
        <end position="160"/>
    </location>
</feature>
<feature type="helix" evidence="2">
    <location>
        <begin position="182"/>
        <end position="190"/>
    </location>
</feature>
<feature type="helix" evidence="2">
    <location>
        <begin position="197"/>
        <end position="204"/>
    </location>
</feature>
<feature type="helix" evidence="2">
    <location>
        <begin position="209"/>
        <end position="215"/>
    </location>
</feature>
<feature type="turn" evidence="2">
    <location>
        <begin position="218"/>
        <end position="220"/>
    </location>
</feature>
<feature type="strand" evidence="2">
    <location>
        <begin position="221"/>
        <end position="224"/>
    </location>
</feature>
<feature type="helix" evidence="2">
    <location>
        <begin position="228"/>
        <end position="239"/>
    </location>
</feature>
<feature type="strand" evidence="2">
    <location>
        <begin position="243"/>
        <end position="249"/>
    </location>
</feature>
<feature type="strand" evidence="2">
    <location>
        <begin position="252"/>
        <end position="258"/>
    </location>
</feature>
<feature type="strand" evidence="2">
    <location>
        <begin position="263"/>
        <end position="266"/>
    </location>
</feature>
<feature type="strand" evidence="2">
    <location>
        <begin position="269"/>
        <end position="273"/>
    </location>
</feature>
<feature type="strand" evidence="2">
    <location>
        <begin position="275"/>
        <end position="282"/>
    </location>
</feature>
<feature type="helix" evidence="2">
    <location>
        <begin position="283"/>
        <end position="285"/>
    </location>
</feature>
<feature type="strand" evidence="2">
    <location>
        <begin position="288"/>
        <end position="296"/>
    </location>
</feature>
<feature type="strand" evidence="2">
    <location>
        <begin position="299"/>
        <end position="307"/>
    </location>
</feature>
<feature type="strand" evidence="2">
    <location>
        <begin position="313"/>
        <end position="319"/>
    </location>
</feature>
<feature type="helix" evidence="2">
    <location>
        <begin position="329"/>
        <end position="335"/>
    </location>
</feature>
<organism>
    <name type="scientific">Yersinia enterocolitica</name>
    <dbReference type="NCBI Taxonomy" id="630"/>
    <lineage>
        <taxon>Bacteria</taxon>
        <taxon>Pseudomonadati</taxon>
        <taxon>Pseudomonadota</taxon>
        <taxon>Gammaproteobacteria</taxon>
        <taxon>Enterobacterales</taxon>
        <taxon>Yersiniaceae</taxon>
        <taxon>Yersinia</taxon>
    </lineage>
</organism>
<accession>P31517</accession>
<keyword id="KW-0002">3D-structure</keyword>
<keyword id="KW-0406">Ion transport</keyword>
<keyword id="KW-0408">Iron</keyword>
<keyword id="KW-0410">Iron transport</keyword>
<keyword id="KW-0813">Transport</keyword>
<dbReference type="EMBL" id="X77867">
    <property type="protein sequence ID" value="CAA54865.1"/>
    <property type="molecule type" value="Genomic_DNA"/>
</dbReference>
<dbReference type="EMBL" id="X68147">
    <property type="status" value="NOT_ANNOTATED_CDS"/>
    <property type="molecule type" value="Genomic_DNA"/>
</dbReference>
<dbReference type="PIR" id="S54436">
    <property type="entry name" value="S54436"/>
</dbReference>
<dbReference type="PDB" id="2J0P">
    <property type="method" value="X-ray"/>
    <property type="resolution" value="1.70 A"/>
    <property type="chains" value="A=1-345"/>
</dbReference>
<dbReference type="PDB" id="2J0R">
    <property type="method" value="X-ray"/>
    <property type="resolution" value="1.90 A"/>
    <property type="chains" value="A=1-345"/>
</dbReference>
<dbReference type="PDB" id="7QXV">
    <property type="method" value="X-ray"/>
    <property type="resolution" value="1.67 A"/>
    <property type="chains" value="A=1-345"/>
</dbReference>
<dbReference type="PDBsum" id="2J0P"/>
<dbReference type="PDBsum" id="2J0R"/>
<dbReference type="PDBsum" id="7QXV"/>
<dbReference type="SMR" id="P31517"/>
<dbReference type="STRING" id="1443113.LC20_04858"/>
<dbReference type="eggNOG" id="COG3720">
    <property type="taxonomic scope" value="Bacteria"/>
</dbReference>
<dbReference type="EvolutionaryTrace" id="P31517"/>
<dbReference type="GO" id="GO:0006826">
    <property type="term" value="P:iron ion transport"/>
    <property type="evidence" value="ECO:0007669"/>
    <property type="project" value="UniProtKB-KW"/>
</dbReference>
<dbReference type="CDD" id="cd16831">
    <property type="entry name" value="HemS-like_C"/>
    <property type="match status" value="1"/>
</dbReference>
<dbReference type="CDD" id="cd16830">
    <property type="entry name" value="HemS-like_N"/>
    <property type="match status" value="1"/>
</dbReference>
<dbReference type="Gene3D" id="3.40.1570.10">
    <property type="entry name" value="HemS/ChuS/ChuX like domains"/>
    <property type="match status" value="2"/>
</dbReference>
<dbReference type="InterPro" id="IPR053733">
    <property type="entry name" value="Heme_Transport_Util_sf"/>
</dbReference>
<dbReference type="InterPro" id="IPR007845">
    <property type="entry name" value="HemS/ChuX_dom"/>
</dbReference>
<dbReference type="Pfam" id="PF05171">
    <property type="entry name" value="HemS"/>
    <property type="match status" value="2"/>
</dbReference>
<dbReference type="SUPFAM" id="SSF144064">
    <property type="entry name" value="Heme iron utilization protein-like"/>
    <property type="match status" value="1"/>
</dbReference>
<proteinExistence type="evidence at protein level"/>
<sequence length="345" mass="39201">MSKSIYEQYLQAKADNPGKYARDLATLMGISEAELTHSRVSHDAKRLKGDARALLAALEAVGEVKAITRNTYAVHEQMGRYENQHLNGHAGLILNPRNLDLRLFLNQWASAFTLTEETRHGVRHSIQFFDHQGDALHKVYVTEQTDMPAWEALLAQFITTEIPELQLEPLSAPEVTEPTATDEAVDAEWRAMTDVHQFFQLLKRNNLTRQQAFRAVGNDLAYQVDNSSLTQLLNIAQQEQNEIMIFVGNRGCVQIFTGMIEKVTPHQDWINVFNQRFTLHLIETTIAESWITRKPTKDGFVTSLELFAADGTQIAQLYGQRTEGQPEQTQWRDEIARLNNKDIAA</sequence>
<comment type="function">
    <text>Part of the binding-protein-dependent transport system for hemin.</text>
</comment>
<comment type="similarity">
    <text evidence="1">To Y.pestis HmuS.</text>
</comment>
<gene>
    <name type="primary">hemS</name>
</gene>
<evidence type="ECO:0000305" key="1"/>
<evidence type="ECO:0007829" key="2">
    <source>
        <dbReference type="PDB" id="7QXV"/>
    </source>
</evidence>
<reference key="1">
    <citation type="journal article" date="1994" name="Mol. Microbiol.">
        <title>Transport of haemin across the cytoplasmic membrane through a haemin-specific periplasmic binding-protein-dependent transport system in Yersinia enterocolitica.</title>
        <authorList>
            <person name="Stojiljkovic I."/>
            <person name="Hantke K."/>
        </authorList>
    </citation>
    <scope>NUCLEOTIDE SEQUENCE [GENOMIC DNA]</scope>
    <source>
        <strain>ATCC 51872 / WA-C / Serotype O:8</strain>
    </source>
</reference>
<reference key="2">
    <citation type="journal article" date="1992" name="EMBO J.">
        <title>Hemin uptake system of Yersinia enterocolitica: similarities with other TonB-dependent systems in Gram-negative bacteria.</title>
        <authorList>
            <person name="Stojiljkovic I."/>
            <person name="Hantke K."/>
        </authorList>
    </citation>
    <scope>NUCLEOTIDE SEQUENCE [GENOMIC DNA] OF 1-25</scope>
    <source>
        <strain>ATCC 51872 / WA-C / Serotype O:8</strain>
    </source>
</reference>
<protein>
    <recommendedName>
        <fullName>Hemin transport protein HemS</fullName>
    </recommendedName>
</protein>